<proteinExistence type="inferred from homology"/>
<organism>
    <name type="scientific">Sulfurimonas denitrificans (strain ATCC 33889 / DSM 1251)</name>
    <name type="common">Thiomicrospira denitrificans (strain ATCC 33889 / DSM 1251)</name>
    <dbReference type="NCBI Taxonomy" id="326298"/>
    <lineage>
        <taxon>Bacteria</taxon>
        <taxon>Pseudomonadati</taxon>
        <taxon>Campylobacterota</taxon>
        <taxon>Epsilonproteobacteria</taxon>
        <taxon>Campylobacterales</taxon>
        <taxon>Sulfurimonadaceae</taxon>
        <taxon>Sulfurimonas</taxon>
    </lineage>
</organism>
<feature type="chain" id="PRO_0000381668" description="Biotin synthase">
    <location>
        <begin position="1"/>
        <end position="281"/>
    </location>
</feature>
<feature type="domain" description="Radical SAM core" evidence="2">
    <location>
        <begin position="1"/>
        <end position="230"/>
    </location>
</feature>
<feature type="binding site" evidence="1">
    <location>
        <position position="18"/>
    </location>
    <ligand>
        <name>[4Fe-4S] cluster</name>
        <dbReference type="ChEBI" id="CHEBI:49883"/>
        <note>4Fe-4S-S-AdoMet</note>
    </ligand>
</feature>
<feature type="binding site" evidence="1">
    <location>
        <position position="22"/>
    </location>
    <ligand>
        <name>[4Fe-4S] cluster</name>
        <dbReference type="ChEBI" id="CHEBI:49883"/>
        <note>4Fe-4S-S-AdoMet</note>
    </ligand>
</feature>
<feature type="binding site" evidence="1">
    <location>
        <position position="25"/>
    </location>
    <ligand>
        <name>[4Fe-4S] cluster</name>
        <dbReference type="ChEBI" id="CHEBI:49883"/>
        <note>4Fe-4S-S-AdoMet</note>
    </ligand>
</feature>
<feature type="binding site" evidence="1">
    <location>
        <position position="62"/>
    </location>
    <ligand>
        <name>[2Fe-2S] cluster</name>
        <dbReference type="ChEBI" id="CHEBI:190135"/>
    </ligand>
</feature>
<feature type="binding site" evidence="1">
    <location>
        <position position="97"/>
    </location>
    <ligand>
        <name>[2Fe-2S] cluster</name>
        <dbReference type="ChEBI" id="CHEBI:190135"/>
    </ligand>
</feature>
<feature type="binding site" evidence="1">
    <location>
        <position position="223"/>
    </location>
    <ligand>
        <name>[2Fe-2S] cluster</name>
        <dbReference type="ChEBI" id="CHEBI:190135"/>
    </ligand>
</feature>
<comment type="function">
    <text evidence="1">Catalyzes the conversion of dethiobiotin (DTB) to biotin by the insertion of a sulfur atom into dethiobiotin via a radical-based mechanism.</text>
</comment>
<comment type="catalytic activity">
    <reaction evidence="1">
        <text>(4R,5S)-dethiobiotin + (sulfur carrier)-SH + 2 reduced [2Fe-2S]-[ferredoxin] + 2 S-adenosyl-L-methionine = (sulfur carrier)-H + biotin + 2 5'-deoxyadenosine + 2 L-methionine + 2 oxidized [2Fe-2S]-[ferredoxin]</text>
        <dbReference type="Rhea" id="RHEA:22060"/>
        <dbReference type="Rhea" id="RHEA-COMP:10000"/>
        <dbReference type="Rhea" id="RHEA-COMP:10001"/>
        <dbReference type="Rhea" id="RHEA-COMP:14737"/>
        <dbReference type="Rhea" id="RHEA-COMP:14739"/>
        <dbReference type="ChEBI" id="CHEBI:17319"/>
        <dbReference type="ChEBI" id="CHEBI:29917"/>
        <dbReference type="ChEBI" id="CHEBI:33737"/>
        <dbReference type="ChEBI" id="CHEBI:33738"/>
        <dbReference type="ChEBI" id="CHEBI:57586"/>
        <dbReference type="ChEBI" id="CHEBI:57844"/>
        <dbReference type="ChEBI" id="CHEBI:59789"/>
        <dbReference type="ChEBI" id="CHEBI:64428"/>
        <dbReference type="ChEBI" id="CHEBI:149473"/>
        <dbReference type="EC" id="2.8.1.6"/>
    </reaction>
</comment>
<comment type="cofactor">
    <cofactor evidence="1">
        <name>[4Fe-4S] cluster</name>
        <dbReference type="ChEBI" id="CHEBI:49883"/>
    </cofactor>
    <text evidence="1">Binds 1 [4Fe-4S] cluster. The cluster is coordinated with 3 cysteines and an exchangeable S-adenosyl-L-methionine.</text>
</comment>
<comment type="cofactor">
    <cofactor evidence="1">
        <name>[2Fe-2S] cluster</name>
        <dbReference type="ChEBI" id="CHEBI:190135"/>
    </cofactor>
    <text evidence="1">Binds 1 [2Fe-2S] cluster. The cluster is coordinated with 3 cysteines and 1 arginine.</text>
</comment>
<comment type="pathway">
    <text evidence="1">Cofactor biosynthesis; biotin biosynthesis; biotin from 7,8-diaminononanoate: step 2/2.</text>
</comment>
<comment type="subunit">
    <text evidence="1">Homodimer.</text>
</comment>
<comment type="similarity">
    <text evidence="1">Belongs to the radical SAM superfamily. Biotin synthase family.</text>
</comment>
<evidence type="ECO:0000255" key="1">
    <source>
        <dbReference type="HAMAP-Rule" id="MF_01694"/>
    </source>
</evidence>
<evidence type="ECO:0000255" key="2">
    <source>
        <dbReference type="PROSITE-ProRule" id="PRU01266"/>
    </source>
</evidence>
<accession>Q30U81</accession>
<protein>
    <recommendedName>
        <fullName evidence="1">Biotin synthase</fullName>
        <ecNumber evidence="1">2.8.1.6</ecNumber>
    </recommendedName>
</protein>
<sequence>MNQKIFLCSICNINSGTCNEDCKFCSQSVRYKADIDRYKQKEISLILKEAQDAYSNGALGFCLVTSDKGLNDKTLNFVCSIAEVLSKELPELRLIACNGTATIEQLLTLRASGIKAYNHNLETSREFYPKICTTHSWDERYETCQNINNAGLVLISGGIFGLGEREEDRVSMLKSLDSLKPTSVPINFYHHNEALELSPNPLSVDEALSLIKLTRAMIPDAQRIMVAGGRELMFGDRESEIFANGANSIVIGNYLTTSGKAMQRDLEMLKSLNLDVASSVK</sequence>
<gene>
    <name evidence="1" type="primary">bioB</name>
    <name type="ordered locus">Suden_0169</name>
</gene>
<reference key="1">
    <citation type="journal article" date="2008" name="Appl. Environ. Microbiol.">
        <title>Genome of the epsilonproteobacterial chemolithoautotroph Sulfurimonas denitrificans.</title>
        <authorList>
            <person name="Sievert S.M."/>
            <person name="Scott K.M."/>
            <person name="Klotz M.G."/>
            <person name="Chain P.S.G."/>
            <person name="Hauser L.J."/>
            <person name="Hemp J."/>
            <person name="Huegler M."/>
            <person name="Land M."/>
            <person name="Lapidus A."/>
            <person name="Larimer F.W."/>
            <person name="Lucas S."/>
            <person name="Malfatti S.A."/>
            <person name="Meyer F."/>
            <person name="Paulsen I.T."/>
            <person name="Ren Q."/>
            <person name="Simon J."/>
            <person name="Bailey K."/>
            <person name="Diaz E."/>
            <person name="Fitzpatrick K.A."/>
            <person name="Glover B."/>
            <person name="Gwatney N."/>
            <person name="Korajkic A."/>
            <person name="Long A."/>
            <person name="Mobberley J.M."/>
            <person name="Pantry S.N."/>
            <person name="Pazder G."/>
            <person name="Peterson S."/>
            <person name="Quintanilla J.D."/>
            <person name="Sprinkle R."/>
            <person name="Stephens J."/>
            <person name="Thomas P."/>
            <person name="Vaughn R."/>
            <person name="Weber M.J."/>
            <person name="Wooten L.L."/>
        </authorList>
    </citation>
    <scope>NUCLEOTIDE SEQUENCE [LARGE SCALE GENOMIC DNA]</scope>
    <source>
        <strain>ATCC 33889 / DSM 1251</strain>
    </source>
</reference>
<dbReference type="EC" id="2.8.1.6" evidence="1"/>
<dbReference type="EMBL" id="CP000153">
    <property type="protein sequence ID" value="ABB43450.1"/>
    <property type="molecule type" value="Genomic_DNA"/>
</dbReference>
<dbReference type="RefSeq" id="WP_011371805.1">
    <property type="nucleotide sequence ID" value="NC_007575.1"/>
</dbReference>
<dbReference type="SMR" id="Q30U81"/>
<dbReference type="STRING" id="326298.Suden_0169"/>
<dbReference type="KEGG" id="tdn:Suden_0169"/>
<dbReference type="eggNOG" id="COG0502">
    <property type="taxonomic scope" value="Bacteria"/>
</dbReference>
<dbReference type="HOGENOM" id="CLU_033172_2_1_7"/>
<dbReference type="OrthoDB" id="9786826at2"/>
<dbReference type="UniPathway" id="UPA00078">
    <property type="reaction ID" value="UER00162"/>
</dbReference>
<dbReference type="Proteomes" id="UP000002714">
    <property type="component" value="Chromosome"/>
</dbReference>
<dbReference type="GO" id="GO:0051537">
    <property type="term" value="F:2 iron, 2 sulfur cluster binding"/>
    <property type="evidence" value="ECO:0007669"/>
    <property type="project" value="UniProtKB-KW"/>
</dbReference>
<dbReference type="GO" id="GO:0051539">
    <property type="term" value="F:4 iron, 4 sulfur cluster binding"/>
    <property type="evidence" value="ECO:0007669"/>
    <property type="project" value="UniProtKB-KW"/>
</dbReference>
<dbReference type="GO" id="GO:0004076">
    <property type="term" value="F:biotin synthase activity"/>
    <property type="evidence" value="ECO:0007669"/>
    <property type="project" value="UniProtKB-UniRule"/>
</dbReference>
<dbReference type="GO" id="GO:0005506">
    <property type="term" value="F:iron ion binding"/>
    <property type="evidence" value="ECO:0007669"/>
    <property type="project" value="UniProtKB-UniRule"/>
</dbReference>
<dbReference type="GO" id="GO:0009102">
    <property type="term" value="P:biotin biosynthetic process"/>
    <property type="evidence" value="ECO:0007669"/>
    <property type="project" value="UniProtKB-UniRule"/>
</dbReference>
<dbReference type="CDD" id="cd01335">
    <property type="entry name" value="Radical_SAM"/>
    <property type="match status" value="1"/>
</dbReference>
<dbReference type="Gene3D" id="3.20.20.70">
    <property type="entry name" value="Aldolase class I"/>
    <property type="match status" value="1"/>
</dbReference>
<dbReference type="HAMAP" id="MF_01694">
    <property type="entry name" value="BioB"/>
    <property type="match status" value="1"/>
</dbReference>
<dbReference type="InterPro" id="IPR013785">
    <property type="entry name" value="Aldolase_TIM"/>
</dbReference>
<dbReference type="InterPro" id="IPR010722">
    <property type="entry name" value="BATS_dom"/>
</dbReference>
<dbReference type="InterPro" id="IPR002684">
    <property type="entry name" value="Biotin_synth/BioAB"/>
</dbReference>
<dbReference type="InterPro" id="IPR024177">
    <property type="entry name" value="Biotin_synthase"/>
</dbReference>
<dbReference type="InterPro" id="IPR006638">
    <property type="entry name" value="Elp3/MiaA/NifB-like_rSAM"/>
</dbReference>
<dbReference type="InterPro" id="IPR007197">
    <property type="entry name" value="rSAM"/>
</dbReference>
<dbReference type="NCBIfam" id="TIGR00433">
    <property type="entry name" value="bioB"/>
    <property type="match status" value="1"/>
</dbReference>
<dbReference type="NCBIfam" id="NF006308">
    <property type="entry name" value="PRK08508.1"/>
    <property type="match status" value="1"/>
</dbReference>
<dbReference type="PANTHER" id="PTHR22976">
    <property type="entry name" value="BIOTIN SYNTHASE"/>
    <property type="match status" value="1"/>
</dbReference>
<dbReference type="PANTHER" id="PTHR22976:SF2">
    <property type="entry name" value="BIOTIN SYNTHASE, MITOCHONDRIAL"/>
    <property type="match status" value="1"/>
</dbReference>
<dbReference type="Pfam" id="PF06968">
    <property type="entry name" value="BATS"/>
    <property type="match status" value="1"/>
</dbReference>
<dbReference type="Pfam" id="PF04055">
    <property type="entry name" value="Radical_SAM"/>
    <property type="match status" value="1"/>
</dbReference>
<dbReference type="PIRSF" id="PIRSF001619">
    <property type="entry name" value="Biotin_synth"/>
    <property type="match status" value="1"/>
</dbReference>
<dbReference type="SFLD" id="SFLDG01060">
    <property type="entry name" value="BATS_domain_containing"/>
    <property type="match status" value="1"/>
</dbReference>
<dbReference type="SFLD" id="SFLDG01278">
    <property type="entry name" value="biotin_synthase_like"/>
    <property type="match status" value="1"/>
</dbReference>
<dbReference type="SMART" id="SM00876">
    <property type="entry name" value="BATS"/>
    <property type="match status" value="1"/>
</dbReference>
<dbReference type="SMART" id="SM00729">
    <property type="entry name" value="Elp3"/>
    <property type="match status" value="1"/>
</dbReference>
<dbReference type="SUPFAM" id="SSF102114">
    <property type="entry name" value="Radical SAM enzymes"/>
    <property type="match status" value="1"/>
</dbReference>
<dbReference type="PROSITE" id="PS51918">
    <property type="entry name" value="RADICAL_SAM"/>
    <property type="match status" value="1"/>
</dbReference>
<name>BIOB_SULDN</name>
<keyword id="KW-0001">2Fe-2S</keyword>
<keyword id="KW-0004">4Fe-4S</keyword>
<keyword id="KW-0093">Biotin biosynthesis</keyword>
<keyword id="KW-0408">Iron</keyword>
<keyword id="KW-0411">Iron-sulfur</keyword>
<keyword id="KW-0479">Metal-binding</keyword>
<keyword id="KW-1185">Reference proteome</keyword>
<keyword id="KW-0949">S-adenosyl-L-methionine</keyword>
<keyword id="KW-0808">Transferase</keyword>